<reference key="1">
    <citation type="journal article" date="1984" name="Nucleic Acids Res.">
        <title>Comparison of the whey acidic protein genes of the rat and mouse.</title>
        <authorList>
            <person name="Campbell S.M."/>
            <person name="Rosen J.M."/>
            <person name="Hennighausen L.G."/>
            <person name="Strech-Jurk U."/>
            <person name="Sippel A.E."/>
        </authorList>
    </citation>
    <scope>NUCLEOTIDE SEQUENCE [GENOMIC DNA]</scope>
</reference>
<reference key="2">
    <citation type="journal article" date="1982" name="Nucleic Acids Res.">
        <title>Comparative sequence analysis of the mRNAs coding for mouse and rat whey protein.</title>
        <authorList>
            <person name="Hennighausen L.G."/>
            <person name="Sippel A.E."/>
        </authorList>
    </citation>
    <scope>NUCLEOTIDE SEQUENCE [MRNA]</scope>
</reference>
<reference key="3">
    <citation type="journal article" date="1982" name="Proc. Natl. Acad. Sci. U.S.A.">
        <title>Complete sequence analysis of cDNA clones encoding rat whey phosphoprotein: homology to a protease inhibitor.</title>
        <authorList>
            <person name="Dandekar A.M."/>
            <person name="Robinson E.A."/>
            <person name="Appella E."/>
            <person name="Qasba P.K."/>
        </authorList>
    </citation>
    <scope>NUCLEOTIDE SEQUENCE [MRNA]</scope>
    <scope>PROTEIN SEQUENCE OF 20-41</scope>
    <scope>DISULFIDE BONDS</scope>
</reference>
<keyword id="KW-0903">Direct protein sequencing</keyword>
<keyword id="KW-1015">Disulfide bond</keyword>
<keyword id="KW-0494">Milk protein</keyword>
<keyword id="KW-0646">Protease inhibitor</keyword>
<keyword id="KW-1185">Reference proteome</keyword>
<keyword id="KW-0677">Repeat</keyword>
<keyword id="KW-0964">Secreted</keyword>
<keyword id="KW-0732">Signal</keyword>
<feature type="signal peptide" evidence="2">
    <location>
        <begin position="1"/>
        <end position="19"/>
    </location>
</feature>
<feature type="chain" id="PRO_0000041353" description="Whey acidic protein">
    <location>
        <begin position="20"/>
        <end position="137"/>
    </location>
</feature>
<feature type="domain" description="WAP 1" evidence="1">
    <location>
        <begin position="27"/>
        <end position="73"/>
    </location>
</feature>
<feature type="domain" description="WAP 2" evidence="1">
    <location>
        <begin position="76"/>
        <end position="127"/>
    </location>
</feature>
<feature type="disulfide bond" evidence="4">
    <location>
        <begin position="34"/>
        <end position="61"/>
    </location>
</feature>
<feature type="disulfide bond" evidence="4">
    <location>
        <begin position="45"/>
        <end position="65"/>
    </location>
</feature>
<feature type="disulfide bond" evidence="4">
    <location>
        <begin position="48"/>
        <end position="60"/>
    </location>
</feature>
<feature type="disulfide bond" evidence="4">
    <location>
        <begin position="54"/>
        <end position="69"/>
    </location>
</feature>
<feature type="disulfide bond" evidence="4">
    <location>
        <begin position="83"/>
        <end position="115"/>
    </location>
</feature>
<feature type="disulfide bond" evidence="4">
    <location>
        <begin position="96"/>
        <end position="119"/>
    </location>
</feature>
<feature type="disulfide bond" evidence="4">
    <location>
        <begin position="102"/>
        <end position="114"/>
    </location>
</feature>
<feature type="disulfide bond" evidence="4">
    <location>
        <begin position="108"/>
        <end position="123"/>
    </location>
</feature>
<feature type="sequence conflict" description="In Ref. 3; AAA42347." evidence="3" ref="3">
    <original>S</original>
    <variation>F</variation>
    <location>
        <position position="4"/>
    </location>
</feature>
<feature type="sequence conflict" description="In Ref. 2 and 3." evidence="3" ref="2 3">
    <original>S</original>
    <variation>P</variation>
    <location>
        <position position="35"/>
    </location>
</feature>
<feature type="sequence conflict" description="In Ref. 2 and 3." evidence="3" ref="2 3">
    <original>F</original>
    <variation>S</variation>
    <location>
        <position position="39"/>
    </location>
</feature>
<feature type="sequence conflict" description="In Ref. 2; AAA42346." evidence="3" ref="2">
    <original>N</original>
    <variation>K</variation>
    <location>
        <position position="47"/>
    </location>
</feature>
<feature type="sequence conflict" description="In Ref. 2 and 3." evidence="3" ref="2 3">
    <original>S</original>
    <variation>P</variation>
    <location>
        <position position="68"/>
    </location>
</feature>
<feature type="sequence conflict" description="In Ref. 2; AAA42346." evidence="3" ref="2">
    <original>D</original>
    <variation>G</variation>
    <location>
        <position position="99"/>
    </location>
</feature>
<feature type="sequence conflict" description="In Ref. 2 and 3." evidence="3" ref="2 3">
    <original>K</original>
    <variation>N</variation>
    <location>
        <position position="116"/>
    </location>
</feature>
<feature type="sequence conflict" description="In Ref. 2." evidence="3" ref="2">
    <original>E</original>
    <variation>K</variation>
    <location>
        <position position="127"/>
    </location>
</feature>
<feature type="sequence conflict" description="In Ref. 2." evidence="3" ref="2">
    <original>K</original>
    <variation>D</variation>
    <location>
        <position position="129"/>
    </location>
</feature>
<feature type="sequence conflict" description="In Ref. 3; AAA42347." evidence="3" ref="3">
    <original>K</original>
    <variation>E</variation>
    <location>
        <position position="129"/>
    </location>
</feature>
<feature type="sequence conflict" description="In Ref. 3; AAA42347." evidence="3" ref="3">
    <original>I</original>
    <variation>V</variation>
    <location>
        <position position="134"/>
    </location>
</feature>
<gene>
    <name type="primary">Wap</name>
</gene>
<protein>
    <recommendedName>
        <fullName>Whey acidic protein</fullName>
        <shortName>WAP</shortName>
    </recommendedName>
    <alternativeName>
        <fullName>Whey phosphoprotein</fullName>
    </alternativeName>
</protein>
<accession>P01174</accession>
<evidence type="ECO:0000255" key="1">
    <source>
        <dbReference type="PROSITE-ProRule" id="PRU00722"/>
    </source>
</evidence>
<evidence type="ECO:0000269" key="2">
    <source>
    </source>
</evidence>
<evidence type="ECO:0000305" key="3"/>
<evidence type="ECO:0000305" key="4">
    <source>
    </source>
</evidence>
<comment type="function">
    <text>Could be a protease inhibitor.</text>
</comment>
<comment type="subcellular location">
    <subcellularLocation>
        <location>Secreted</location>
    </subcellularLocation>
</comment>
<comment type="tissue specificity">
    <text>Milk-specific; major protein component of milk whey.</text>
</comment>
<comment type="PTM">
    <text>Contains 8 disulfide bonds.</text>
</comment>
<organism>
    <name type="scientific">Rattus norvegicus</name>
    <name type="common">Rat</name>
    <dbReference type="NCBI Taxonomy" id="10116"/>
    <lineage>
        <taxon>Eukaryota</taxon>
        <taxon>Metazoa</taxon>
        <taxon>Chordata</taxon>
        <taxon>Craniata</taxon>
        <taxon>Vertebrata</taxon>
        <taxon>Euteleostomi</taxon>
        <taxon>Mammalia</taxon>
        <taxon>Eutheria</taxon>
        <taxon>Euarchontoglires</taxon>
        <taxon>Glires</taxon>
        <taxon>Rodentia</taxon>
        <taxon>Myomorpha</taxon>
        <taxon>Muroidea</taxon>
        <taxon>Muridae</taxon>
        <taxon>Murinae</taxon>
        <taxon>Rattus</taxon>
    </lineage>
</organism>
<name>WAP_RAT</name>
<dbReference type="EMBL" id="X01153">
    <property type="protein sequence ID" value="CAA25600.2"/>
    <property type="molecule type" value="Genomic_DNA"/>
</dbReference>
<dbReference type="EMBL" id="X01154">
    <property type="protein sequence ID" value="CAA25600.2"/>
    <property type="status" value="JOINED"/>
    <property type="molecule type" value="Genomic_DNA"/>
</dbReference>
<dbReference type="EMBL" id="X01155">
    <property type="protein sequence ID" value="CAA25600.2"/>
    <property type="status" value="JOINED"/>
    <property type="molecule type" value="Genomic_DNA"/>
</dbReference>
<dbReference type="EMBL" id="X01156">
    <property type="protein sequence ID" value="CAA25600.2"/>
    <property type="status" value="JOINED"/>
    <property type="molecule type" value="Genomic_DNA"/>
</dbReference>
<dbReference type="EMBL" id="J00802">
    <property type="protein sequence ID" value="AAA42347.1"/>
    <property type="molecule type" value="mRNA"/>
</dbReference>
<dbReference type="EMBL" id="J00801">
    <property type="protein sequence ID" value="AAA42346.1"/>
    <property type="molecule type" value="mRNA"/>
</dbReference>
<dbReference type="PIR" id="A93920">
    <property type="entry name" value="WYRT"/>
</dbReference>
<dbReference type="RefSeq" id="NP_446203.1">
    <property type="nucleotide sequence ID" value="NM_053751.4"/>
</dbReference>
<dbReference type="SMR" id="P01174"/>
<dbReference type="FunCoup" id="P01174">
    <property type="interactions" value="77"/>
</dbReference>
<dbReference type="STRING" id="10116.ENSRNOP00000073381"/>
<dbReference type="PaxDb" id="10116-ENSRNOP00000010744"/>
<dbReference type="GeneID" id="114596"/>
<dbReference type="KEGG" id="rno:114596"/>
<dbReference type="UCSC" id="RGD:621851">
    <property type="organism name" value="rat"/>
</dbReference>
<dbReference type="AGR" id="RGD:621851"/>
<dbReference type="CTD" id="22373"/>
<dbReference type="RGD" id="621851">
    <property type="gene designation" value="Wap"/>
</dbReference>
<dbReference type="eggNOG" id="ENOG502RXHY">
    <property type="taxonomic scope" value="Eukaryota"/>
</dbReference>
<dbReference type="InParanoid" id="P01174"/>
<dbReference type="OrthoDB" id="6060011at2759"/>
<dbReference type="PhylomeDB" id="P01174"/>
<dbReference type="PRO" id="PR:P01174"/>
<dbReference type="Proteomes" id="UP000002494">
    <property type="component" value="Unplaced"/>
</dbReference>
<dbReference type="GO" id="GO:0005615">
    <property type="term" value="C:extracellular space"/>
    <property type="evidence" value="ECO:0000318"/>
    <property type="project" value="GO_Central"/>
</dbReference>
<dbReference type="GO" id="GO:0030414">
    <property type="term" value="F:peptidase inhibitor activity"/>
    <property type="evidence" value="ECO:0000303"/>
    <property type="project" value="RGD"/>
</dbReference>
<dbReference type="GO" id="GO:0004867">
    <property type="term" value="F:serine-type endopeptidase inhibitor activity"/>
    <property type="evidence" value="ECO:0000318"/>
    <property type="project" value="GO_Central"/>
</dbReference>
<dbReference type="GO" id="GO:0019731">
    <property type="term" value="P:antibacterial humoral response"/>
    <property type="evidence" value="ECO:0000318"/>
    <property type="project" value="GO_Central"/>
</dbReference>
<dbReference type="GO" id="GO:0045087">
    <property type="term" value="P:innate immune response"/>
    <property type="evidence" value="ECO:0000318"/>
    <property type="project" value="GO_Central"/>
</dbReference>
<dbReference type="CDD" id="cd00199">
    <property type="entry name" value="WAP"/>
    <property type="match status" value="1"/>
</dbReference>
<dbReference type="Gene3D" id="4.10.75.10">
    <property type="entry name" value="Elafin-like"/>
    <property type="match status" value="1"/>
</dbReference>
<dbReference type="InterPro" id="IPR036645">
    <property type="entry name" value="Elafin-like_sf"/>
</dbReference>
<dbReference type="InterPro" id="IPR008197">
    <property type="entry name" value="WAP_dom"/>
</dbReference>
<dbReference type="InterPro" id="IPR050514">
    <property type="entry name" value="WAP_four-disulfide_core"/>
</dbReference>
<dbReference type="PANTHER" id="PTHR19441">
    <property type="entry name" value="WHEY ACDIC PROTEIN WAP"/>
    <property type="match status" value="1"/>
</dbReference>
<dbReference type="PANTHER" id="PTHR19441:SF96">
    <property type="entry name" value="WHEY ACIDIC PROTEIN"/>
    <property type="match status" value="1"/>
</dbReference>
<dbReference type="Pfam" id="PF00095">
    <property type="entry name" value="WAP"/>
    <property type="match status" value="1"/>
</dbReference>
<dbReference type="PRINTS" id="PR00003">
    <property type="entry name" value="4DISULPHCORE"/>
</dbReference>
<dbReference type="SMART" id="SM00217">
    <property type="entry name" value="WAP"/>
    <property type="match status" value="1"/>
</dbReference>
<dbReference type="SUPFAM" id="SSF57256">
    <property type="entry name" value="Elafin-like"/>
    <property type="match status" value="1"/>
</dbReference>
<dbReference type="PROSITE" id="PS51390">
    <property type="entry name" value="WAP"/>
    <property type="match status" value="2"/>
</dbReference>
<proteinExistence type="evidence at protein level"/>
<sequence length="137" mass="14827">MRCSISLVLGLLALEVALARNLQEHVFNSVQSMCSDDSFSEDTECINCQTNEECAQNDMCCPSSCGRSCKTPVNIEVQKAGRCPWNPIQMIAAGPCPKDNPCSIDSDCSGTMKCCKNGCIMSCMDPEPKSPTVISFQ</sequence>